<gene>
    <name evidence="1" type="primary">rplI</name>
    <name type="ordered locus">Rfer_2196</name>
</gene>
<proteinExistence type="inferred from homology"/>
<accession>Q21WD3</accession>
<reference key="1">
    <citation type="submission" date="2006-02" db="EMBL/GenBank/DDBJ databases">
        <title>Complete sequence of chromosome of Rhodoferax ferrireducens DSM 15236.</title>
        <authorList>
            <person name="Copeland A."/>
            <person name="Lucas S."/>
            <person name="Lapidus A."/>
            <person name="Barry K."/>
            <person name="Detter J.C."/>
            <person name="Glavina del Rio T."/>
            <person name="Hammon N."/>
            <person name="Israni S."/>
            <person name="Pitluck S."/>
            <person name="Brettin T."/>
            <person name="Bruce D."/>
            <person name="Han C."/>
            <person name="Tapia R."/>
            <person name="Gilna P."/>
            <person name="Kiss H."/>
            <person name="Schmutz J."/>
            <person name="Larimer F."/>
            <person name="Land M."/>
            <person name="Kyrpides N."/>
            <person name="Ivanova N."/>
            <person name="Richardson P."/>
        </authorList>
    </citation>
    <scope>NUCLEOTIDE SEQUENCE [LARGE SCALE GENOMIC DNA]</scope>
    <source>
        <strain>ATCC BAA-621 / DSM 15236 / T118</strain>
    </source>
</reference>
<comment type="function">
    <text evidence="1">Binds to the 23S rRNA.</text>
</comment>
<comment type="similarity">
    <text evidence="1">Belongs to the bacterial ribosomal protein bL9 family.</text>
</comment>
<feature type="chain" id="PRO_0000258482" description="Large ribosomal subunit protein bL9">
    <location>
        <begin position="1"/>
        <end position="150"/>
    </location>
</feature>
<evidence type="ECO:0000255" key="1">
    <source>
        <dbReference type="HAMAP-Rule" id="MF_00503"/>
    </source>
</evidence>
<evidence type="ECO:0000305" key="2"/>
<sequence length="150" mass="15956">MQIILLDKVVNLGNLGEVVRVKDGYARNFLIPSGRARRATASAKQEFEAKRAELEKAAAAKLAESQTVGEKLAGTTCKLTQKAGVDGRLFGSVTNADIAEELTKTGFKVTKAQIRMPNGPIKVVGDSKVSVALHTDVLVEITVSVYGETA</sequence>
<name>RL9_ALBFT</name>
<keyword id="KW-1185">Reference proteome</keyword>
<keyword id="KW-0687">Ribonucleoprotein</keyword>
<keyword id="KW-0689">Ribosomal protein</keyword>
<keyword id="KW-0694">RNA-binding</keyword>
<keyword id="KW-0699">rRNA-binding</keyword>
<dbReference type="EMBL" id="CP000267">
    <property type="protein sequence ID" value="ABD69920.1"/>
    <property type="molecule type" value="Genomic_DNA"/>
</dbReference>
<dbReference type="RefSeq" id="WP_011464488.1">
    <property type="nucleotide sequence ID" value="NC_007908.1"/>
</dbReference>
<dbReference type="SMR" id="Q21WD3"/>
<dbReference type="STRING" id="338969.Rfer_2196"/>
<dbReference type="KEGG" id="rfr:Rfer_2196"/>
<dbReference type="eggNOG" id="COG0359">
    <property type="taxonomic scope" value="Bacteria"/>
</dbReference>
<dbReference type="HOGENOM" id="CLU_078938_4_1_4"/>
<dbReference type="OrthoDB" id="9788336at2"/>
<dbReference type="Proteomes" id="UP000008332">
    <property type="component" value="Chromosome"/>
</dbReference>
<dbReference type="GO" id="GO:1990904">
    <property type="term" value="C:ribonucleoprotein complex"/>
    <property type="evidence" value="ECO:0007669"/>
    <property type="project" value="UniProtKB-KW"/>
</dbReference>
<dbReference type="GO" id="GO:0005840">
    <property type="term" value="C:ribosome"/>
    <property type="evidence" value="ECO:0007669"/>
    <property type="project" value="UniProtKB-KW"/>
</dbReference>
<dbReference type="GO" id="GO:0019843">
    <property type="term" value="F:rRNA binding"/>
    <property type="evidence" value="ECO:0007669"/>
    <property type="project" value="UniProtKB-UniRule"/>
</dbReference>
<dbReference type="GO" id="GO:0003735">
    <property type="term" value="F:structural constituent of ribosome"/>
    <property type="evidence" value="ECO:0007669"/>
    <property type="project" value="InterPro"/>
</dbReference>
<dbReference type="GO" id="GO:0006412">
    <property type="term" value="P:translation"/>
    <property type="evidence" value="ECO:0007669"/>
    <property type="project" value="UniProtKB-UniRule"/>
</dbReference>
<dbReference type="Gene3D" id="3.10.430.100">
    <property type="entry name" value="Ribosomal protein L9, C-terminal domain"/>
    <property type="match status" value="1"/>
</dbReference>
<dbReference type="Gene3D" id="3.40.5.10">
    <property type="entry name" value="Ribosomal protein L9, N-terminal domain"/>
    <property type="match status" value="1"/>
</dbReference>
<dbReference type="HAMAP" id="MF_00503">
    <property type="entry name" value="Ribosomal_bL9"/>
    <property type="match status" value="1"/>
</dbReference>
<dbReference type="InterPro" id="IPR000244">
    <property type="entry name" value="Ribosomal_bL9"/>
</dbReference>
<dbReference type="InterPro" id="IPR009027">
    <property type="entry name" value="Ribosomal_bL9/RNase_H1_N"/>
</dbReference>
<dbReference type="InterPro" id="IPR020594">
    <property type="entry name" value="Ribosomal_bL9_bac/chp"/>
</dbReference>
<dbReference type="InterPro" id="IPR020069">
    <property type="entry name" value="Ribosomal_bL9_C"/>
</dbReference>
<dbReference type="InterPro" id="IPR036791">
    <property type="entry name" value="Ribosomal_bL9_C_sf"/>
</dbReference>
<dbReference type="InterPro" id="IPR020070">
    <property type="entry name" value="Ribosomal_bL9_N"/>
</dbReference>
<dbReference type="InterPro" id="IPR036935">
    <property type="entry name" value="Ribosomal_bL9_N_sf"/>
</dbReference>
<dbReference type="NCBIfam" id="TIGR00158">
    <property type="entry name" value="L9"/>
    <property type="match status" value="1"/>
</dbReference>
<dbReference type="PANTHER" id="PTHR21368">
    <property type="entry name" value="50S RIBOSOMAL PROTEIN L9"/>
    <property type="match status" value="1"/>
</dbReference>
<dbReference type="Pfam" id="PF03948">
    <property type="entry name" value="Ribosomal_L9_C"/>
    <property type="match status" value="1"/>
</dbReference>
<dbReference type="Pfam" id="PF01281">
    <property type="entry name" value="Ribosomal_L9_N"/>
    <property type="match status" value="1"/>
</dbReference>
<dbReference type="SUPFAM" id="SSF55658">
    <property type="entry name" value="L9 N-domain-like"/>
    <property type="match status" value="1"/>
</dbReference>
<dbReference type="SUPFAM" id="SSF55653">
    <property type="entry name" value="Ribosomal protein L9 C-domain"/>
    <property type="match status" value="1"/>
</dbReference>
<dbReference type="PROSITE" id="PS00651">
    <property type="entry name" value="RIBOSOMAL_L9"/>
    <property type="match status" value="1"/>
</dbReference>
<organism>
    <name type="scientific">Albidiferax ferrireducens (strain ATCC BAA-621 / DSM 15236 / T118)</name>
    <name type="common">Rhodoferax ferrireducens</name>
    <dbReference type="NCBI Taxonomy" id="338969"/>
    <lineage>
        <taxon>Bacteria</taxon>
        <taxon>Pseudomonadati</taxon>
        <taxon>Pseudomonadota</taxon>
        <taxon>Betaproteobacteria</taxon>
        <taxon>Burkholderiales</taxon>
        <taxon>Comamonadaceae</taxon>
        <taxon>Rhodoferax</taxon>
    </lineage>
</organism>
<protein>
    <recommendedName>
        <fullName evidence="1">Large ribosomal subunit protein bL9</fullName>
    </recommendedName>
    <alternativeName>
        <fullName evidence="2">50S ribosomal protein L9</fullName>
    </alternativeName>
</protein>